<feature type="chain" id="PRO_0000305461" description="Pantothenate synthetase">
    <location>
        <begin position="1"/>
        <end position="283"/>
    </location>
</feature>
<feature type="active site" description="Proton donor" evidence="1">
    <location>
        <position position="37"/>
    </location>
</feature>
<feature type="binding site" evidence="1">
    <location>
        <begin position="30"/>
        <end position="37"/>
    </location>
    <ligand>
        <name>ATP</name>
        <dbReference type="ChEBI" id="CHEBI:30616"/>
    </ligand>
</feature>
<feature type="binding site" evidence="1">
    <location>
        <position position="61"/>
    </location>
    <ligand>
        <name>(R)-pantoate</name>
        <dbReference type="ChEBI" id="CHEBI:15980"/>
    </ligand>
</feature>
<feature type="binding site" evidence="1">
    <location>
        <position position="61"/>
    </location>
    <ligand>
        <name>beta-alanine</name>
        <dbReference type="ChEBI" id="CHEBI:57966"/>
    </ligand>
</feature>
<feature type="binding site" evidence="1">
    <location>
        <begin position="149"/>
        <end position="152"/>
    </location>
    <ligand>
        <name>ATP</name>
        <dbReference type="ChEBI" id="CHEBI:30616"/>
    </ligand>
</feature>
<feature type="binding site" evidence="1">
    <location>
        <position position="155"/>
    </location>
    <ligand>
        <name>(R)-pantoate</name>
        <dbReference type="ChEBI" id="CHEBI:15980"/>
    </ligand>
</feature>
<feature type="binding site" evidence="1">
    <location>
        <position position="178"/>
    </location>
    <ligand>
        <name>ATP</name>
        <dbReference type="ChEBI" id="CHEBI:30616"/>
    </ligand>
</feature>
<feature type="binding site" evidence="1">
    <location>
        <begin position="186"/>
        <end position="189"/>
    </location>
    <ligand>
        <name>ATP</name>
        <dbReference type="ChEBI" id="CHEBI:30616"/>
    </ligand>
</feature>
<name>PANC_HAHCH</name>
<gene>
    <name evidence="1" type="primary">panC</name>
    <name type="ordered locus">HCH_06265</name>
</gene>
<comment type="function">
    <text evidence="1">Catalyzes the condensation of pantoate with beta-alanine in an ATP-dependent reaction via a pantoyl-adenylate intermediate.</text>
</comment>
<comment type="catalytic activity">
    <reaction evidence="1">
        <text>(R)-pantoate + beta-alanine + ATP = (R)-pantothenate + AMP + diphosphate + H(+)</text>
        <dbReference type="Rhea" id="RHEA:10912"/>
        <dbReference type="ChEBI" id="CHEBI:15378"/>
        <dbReference type="ChEBI" id="CHEBI:15980"/>
        <dbReference type="ChEBI" id="CHEBI:29032"/>
        <dbReference type="ChEBI" id="CHEBI:30616"/>
        <dbReference type="ChEBI" id="CHEBI:33019"/>
        <dbReference type="ChEBI" id="CHEBI:57966"/>
        <dbReference type="ChEBI" id="CHEBI:456215"/>
        <dbReference type="EC" id="6.3.2.1"/>
    </reaction>
</comment>
<comment type="pathway">
    <text evidence="1">Cofactor biosynthesis; (R)-pantothenate biosynthesis; (R)-pantothenate from (R)-pantoate and beta-alanine: step 1/1.</text>
</comment>
<comment type="subunit">
    <text evidence="1">Homodimer.</text>
</comment>
<comment type="subcellular location">
    <subcellularLocation>
        <location evidence="1">Cytoplasm</location>
    </subcellularLocation>
</comment>
<comment type="miscellaneous">
    <text evidence="1">The reaction proceeds by a bi uni uni bi ping pong mechanism.</text>
</comment>
<comment type="similarity">
    <text evidence="1">Belongs to the pantothenate synthetase family.</text>
</comment>
<protein>
    <recommendedName>
        <fullName evidence="1">Pantothenate synthetase</fullName>
        <shortName evidence="1">PS</shortName>
        <ecNumber evidence="1">6.3.2.1</ecNumber>
    </recommendedName>
    <alternativeName>
        <fullName evidence="1">Pantoate--beta-alanine ligase</fullName>
    </alternativeName>
    <alternativeName>
        <fullName evidence="1">Pantoate-activating enzyme</fullName>
    </alternativeName>
</protein>
<evidence type="ECO:0000255" key="1">
    <source>
        <dbReference type="HAMAP-Rule" id="MF_00158"/>
    </source>
</evidence>
<reference key="1">
    <citation type="journal article" date="2005" name="Nucleic Acids Res.">
        <title>Genomic blueprint of Hahella chejuensis, a marine microbe producing an algicidal agent.</title>
        <authorList>
            <person name="Jeong H."/>
            <person name="Yim J.H."/>
            <person name="Lee C."/>
            <person name="Choi S.-H."/>
            <person name="Park Y.K."/>
            <person name="Yoon S.H."/>
            <person name="Hur C.-G."/>
            <person name="Kang H.-Y."/>
            <person name="Kim D."/>
            <person name="Lee H.H."/>
            <person name="Park K.H."/>
            <person name="Park S.-H."/>
            <person name="Park H.-S."/>
            <person name="Lee H.K."/>
            <person name="Oh T.K."/>
            <person name="Kim J.F."/>
        </authorList>
    </citation>
    <scope>NUCLEOTIDE SEQUENCE [LARGE SCALE GENOMIC DNA]</scope>
    <source>
        <strain>KCTC 2396</strain>
    </source>
</reference>
<proteinExistence type="inferred from homology"/>
<keyword id="KW-0067">ATP-binding</keyword>
<keyword id="KW-0963">Cytoplasm</keyword>
<keyword id="KW-0436">Ligase</keyword>
<keyword id="KW-0547">Nucleotide-binding</keyword>
<keyword id="KW-0566">Pantothenate biosynthesis</keyword>
<keyword id="KW-1185">Reference proteome</keyword>
<dbReference type="EC" id="6.3.2.1" evidence="1"/>
<dbReference type="EMBL" id="CP000155">
    <property type="protein sequence ID" value="ABC32912.1"/>
    <property type="molecule type" value="Genomic_DNA"/>
</dbReference>
<dbReference type="RefSeq" id="WP_011399968.1">
    <property type="nucleotide sequence ID" value="NC_007645.1"/>
</dbReference>
<dbReference type="SMR" id="Q2S8W2"/>
<dbReference type="STRING" id="349521.HCH_06265"/>
<dbReference type="KEGG" id="hch:HCH_06265"/>
<dbReference type="eggNOG" id="COG0414">
    <property type="taxonomic scope" value="Bacteria"/>
</dbReference>
<dbReference type="HOGENOM" id="CLU_047148_0_0_6"/>
<dbReference type="OrthoDB" id="9773087at2"/>
<dbReference type="UniPathway" id="UPA00028">
    <property type="reaction ID" value="UER00005"/>
</dbReference>
<dbReference type="Proteomes" id="UP000000238">
    <property type="component" value="Chromosome"/>
</dbReference>
<dbReference type="GO" id="GO:0005829">
    <property type="term" value="C:cytosol"/>
    <property type="evidence" value="ECO:0007669"/>
    <property type="project" value="TreeGrafter"/>
</dbReference>
<dbReference type="GO" id="GO:0005524">
    <property type="term" value="F:ATP binding"/>
    <property type="evidence" value="ECO:0007669"/>
    <property type="project" value="UniProtKB-KW"/>
</dbReference>
<dbReference type="GO" id="GO:0004592">
    <property type="term" value="F:pantoate-beta-alanine ligase activity"/>
    <property type="evidence" value="ECO:0007669"/>
    <property type="project" value="UniProtKB-UniRule"/>
</dbReference>
<dbReference type="GO" id="GO:0015940">
    <property type="term" value="P:pantothenate biosynthetic process"/>
    <property type="evidence" value="ECO:0007669"/>
    <property type="project" value="UniProtKB-UniRule"/>
</dbReference>
<dbReference type="CDD" id="cd00560">
    <property type="entry name" value="PanC"/>
    <property type="match status" value="1"/>
</dbReference>
<dbReference type="FunFam" id="3.30.1300.10:FF:000001">
    <property type="entry name" value="Pantothenate synthetase"/>
    <property type="match status" value="1"/>
</dbReference>
<dbReference type="FunFam" id="3.40.50.620:FF:000013">
    <property type="entry name" value="Pantothenate synthetase"/>
    <property type="match status" value="1"/>
</dbReference>
<dbReference type="Gene3D" id="3.40.50.620">
    <property type="entry name" value="HUPs"/>
    <property type="match status" value="1"/>
</dbReference>
<dbReference type="Gene3D" id="3.30.1300.10">
    <property type="entry name" value="Pantoate-beta-alanine ligase, C-terminal domain"/>
    <property type="match status" value="1"/>
</dbReference>
<dbReference type="HAMAP" id="MF_00158">
    <property type="entry name" value="PanC"/>
    <property type="match status" value="1"/>
</dbReference>
<dbReference type="InterPro" id="IPR004821">
    <property type="entry name" value="Cyt_trans-like"/>
</dbReference>
<dbReference type="InterPro" id="IPR003721">
    <property type="entry name" value="Pantoate_ligase"/>
</dbReference>
<dbReference type="InterPro" id="IPR042176">
    <property type="entry name" value="Pantoate_ligase_C"/>
</dbReference>
<dbReference type="InterPro" id="IPR014729">
    <property type="entry name" value="Rossmann-like_a/b/a_fold"/>
</dbReference>
<dbReference type="NCBIfam" id="TIGR00125">
    <property type="entry name" value="cyt_tran_rel"/>
    <property type="match status" value="1"/>
</dbReference>
<dbReference type="NCBIfam" id="TIGR00018">
    <property type="entry name" value="panC"/>
    <property type="match status" value="1"/>
</dbReference>
<dbReference type="PANTHER" id="PTHR21299">
    <property type="entry name" value="CYTIDYLATE KINASE/PANTOATE-BETA-ALANINE LIGASE"/>
    <property type="match status" value="1"/>
</dbReference>
<dbReference type="PANTHER" id="PTHR21299:SF1">
    <property type="entry name" value="PANTOATE--BETA-ALANINE LIGASE"/>
    <property type="match status" value="1"/>
</dbReference>
<dbReference type="Pfam" id="PF02569">
    <property type="entry name" value="Pantoate_ligase"/>
    <property type="match status" value="1"/>
</dbReference>
<dbReference type="SUPFAM" id="SSF52374">
    <property type="entry name" value="Nucleotidylyl transferase"/>
    <property type="match status" value="1"/>
</dbReference>
<accession>Q2S8W2</accession>
<organism>
    <name type="scientific">Hahella chejuensis (strain KCTC 2396)</name>
    <dbReference type="NCBI Taxonomy" id="349521"/>
    <lineage>
        <taxon>Bacteria</taxon>
        <taxon>Pseudomonadati</taxon>
        <taxon>Pseudomonadota</taxon>
        <taxon>Gammaproteobacteria</taxon>
        <taxon>Oceanospirillales</taxon>
        <taxon>Hahellaceae</taxon>
        <taxon>Hahella</taxon>
    </lineage>
</organism>
<sequence length="283" mass="31132">MITIHRVKDLRAAIRQQRTQGKRIGLVPTMGNLHAGHVSLVKQAKELCDYVVTSIFVNPLQFGANEDLDKYPRTLDADKEKLVAAGNHLLFTPEVSQLYPEGLERHTKVITPGLSELHCGASRPSHFTGVTTVVSMLFNMVQPDVAIFGEKDFQQLAVIRKMTRDLYLPIVIESGPTLRETDGLAMSSRNGYLSAEQRQTAPLLYKLLQESAEQIENGDKDFAAISAEANNRLTKAGFVPDYFNIVNSDTLSPAVPSDSDITILAAAYLGTTRLIDNISVHLG</sequence>